<proteinExistence type="inferred from homology"/>
<protein>
    <recommendedName>
        <fullName evidence="1">3-phosphoshikimate 1-carboxyvinyltransferase</fullName>
        <ecNumber evidence="1">2.5.1.19</ecNumber>
    </recommendedName>
    <alternativeName>
        <fullName evidence="1">5-enolpyruvylshikimate-3-phosphate synthase</fullName>
        <shortName evidence="1">EPSP synthase</shortName>
        <shortName evidence="1">EPSPS</shortName>
    </alternativeName>
</protein>
<sequence>MSYVKVEKASSFELTISDIAPDKSISHRSAMFSLLSDEPSQIENFLRAEDTLNTLEIVKALGAQVEESDEKILIKPPKQIQEPKDVLDCGNSGTGMRLFCGLLAGINGFFVLTGDKYLRERPMARVAKPLRSIGAKIDGRDNGNKAPLALRGNTDLEPFDYESPIASAQVKSALILAALRAKGECSISEPELSRDHTERMLQGMGANIDTHWSHGRYRVDVVPLTKPLEPLKIRIPADPSSAFFFAVAAAIAPRSKVVLENITLNPTRIEAFKVLQKMGADVVFLEKENKYEPIGDIIVTHNSLHGVEVSENIPWLIDELPALAIAMAVADGRSIVRNAKELRVKESDRITCVVENLKKCGIQAQEFEDGYEIIGGELHSAAIDSCGDHRIAMSFLIAGLVSGMEVRDIECIKTSFPNFLDLLSQIVKVERGD</sequence>
<evidence type="ECO:0000255" key="1">
    <source>
        <dbReference type="HAMAP-Rule" id="MF_00210"/>
    </source>
</evidence>
<gene>
    <name evidence="1" type="primary">aroA</name>
    <name type="ordered locus">NIS_0661</name>
</gene>
<feature type="chain" id="PRO_1000058603" description="3-phosphoshikimate 1-carboxyvinyltransferase">
    <location>
        <begin position="1"/>
        <end position="433"/>
    </location>
</feature>
<feature type="active site" description="Proton acceptor" evidence="1">
    <location>
        <position position="318"/>
    </location>
</feature>
<feature type="binding site" evidence="1">
    <location>
        <position position="23"/>
    </location>
    <ligand>
        <name>3-phosphoshikimate</name>
        <dbReference type="ChEBI" id="CHEBI:145989"/>
    </ligand>
</feature>
<feature type="binding site" evidence="1">
    <location>
        <position position="23"/>
    </location>
    <ligand>
        <name>phosphoenolpyruvate</name>
        <dbReference type="ChEBI" id="CHEBI:58702"/>
    </ligand>
</feature>
<feature type="binding site" evidence="1">
    <location>
        <position position="24"/>
    </location>
    <ligand>
        <name>3-phosphoshikimate</name>
        <dbReference type="ChEBI" id="CHEBI:145989"/>
    </ligand>
</feature>
<feature type="binding site" evidence="1">
    <location>
        <position position="28"/>
    </location>
    <ligand>
        <name>3-phosphoshikimate</name>
        <dbReference type="ChEBI" id="CHEBI:145989"/>
    </ligand>
</feature>
<feature type="binding site" evidence="1">
    <location>
        <position position="93"/>
    </location>
    <ligand>
        <name>phosphoenolpyruvate</name>
        <dbReference type="ChEBI" id="CHEBI:58702"/>
    </ligand>
</feature>
<feature type="binding site" evidence="1">
    <location>
        <position position="121"/>
    </location>
    <ligand>
        <name>phosphoenolpyruvate</name>
        <dbReference type="ChEBI" id="CHEBI:58702"/>
    </ligand>
</feature>
<feature type="binding site" evidence="1">
    <location>
        <position position="167"/>
    </location>
    <ligand>
        <name>3-phosphoshikimate</name>
        <dbReference type="ChEBI" id="CHEBI:145989"/>
    </ligand>
</feature>
<feature type="binding site" evidence="1">
    <location>
        <position position="169"/>
    </location>
    <ligand>
        <name>3-phosphoshikimate</name>
        <dbReference type="ChEBI" id="CHEBI:145989"/>
    </ligand>
</feature>
<feature type="binding site" evidence="1">
    <location>
        <position position="169"/>
    </location>
    <ligand>
        <name>phosphoenolpyruvate</name>
        <dbReference type="ChEBI" id="CHEBI:58702"/>
    </ligand>
</feature>
<feature type="binding site" evidence="1">
    <location>
        <position position="318"/>
    </location>
    <ligand>
        <name>3-phosphoshikimate</name>
        <dbReference type="ChEBI" id="CHEBI:145989"/>
    </ligand>
</feature>
<feature type="binding site" evidence="1">
    <location>
        <position position="345"/>
    </location>
    <ligand>
        <name>3-phosphoshikimate</name>
        <dbReference type="ChEBI" id="CHEBI:145989"/>
    </ligand>
</feature>
<feature type="binding site" evidence="1">
    <location>
        <position position="349"/>
    </location>
    <ligand>
        <name>phosphoenolpyruvate</name>
        <dbReference type="ChEBI" id="CHEBI:58702"/>
    </ligand>
</feature>
<feature type="binding site" evidence="1">
    <location>
        <position position="390"/>
    </location>
    <ligand>
        <name>phosphoenolpyruvate</name>
        <dbReference type="ChEBI" id="CHEBI:58702"/>
    </ligand>
</feature>
<accession>A6Q2R6</accession>
<keyword id="KW-0028">Amino-acid biosynthesis</keyword>
<keyword id="KW-0057">Aromatic amino acid biosynthesis</keyword>
<keyword id="KW-0963">Cytoplasm</keyword>
<keyword id="KW-1185">Reference proteome</keyword>
<keyword id="KW-0808">Transferase</keyword>
<name>AROA_NITSB</name>
<reference key="1">
    <citation type="journal article" date="2007" name="Proc. Natl. Acad. Sci. U.S.A.">
        <title>Deep-sea vent epsilon-proteobacterial genomes provide insights into emergence of pathogens.</title>
        <authorList>
            <person name="Nakagawa S."/>
            <person name="Takaki Y."/>
            <person name="Shimamura S."/>
            <person name="Reysenbach A.-L."/>
            <person name="Takai K."/>
            <person name="Horikoshi K."/>
        </authorList>
    </citation>
    <scope>NUCLEOTIDE SEQUENCE [LARGE SCALE GENOMIC DNA]</scope>
    <source>
        <strain>SB155-2</strain>
    </source>
</reference>
<dbReference type="EC" id="2.5.1.19" evidence="1"/>
<dbReference type="EMBL" id="AP009178">
    <property type="protein sequence ID" value="BAF69775.1"/>
    <property type="molecule type" value="Genomic_DNA"/>
</dbReference>
<dbReference type="RefSeq" id="WP_012082038.1">
    <property type="nucleotide sequence ID" value="NC_009662.1"/>
</dbReference>
<dbReference type="SMR" id="A6Q2R6"/>
<dbReference type="FunCoup" id="A6Q2R6">
    <property type="interactions" value="450"/>
</dbReference>
<dbReference type="STRING" id="387092.NIS_0661"/>
<dbReference type="KEGG" id="nis:NIS_0661"/>
<dbReference type="eggNOG" id="COG0128">
    <property type="taxonomic scope" value="Bacteria"/>
</dbReference>
<dbReference type="HOGENOM" id="CLU_024321_0_1_7"/>
<dbReference type="InParanoid" id="A6Q2R6"/>
<dbReference type="OrthoDB" id="9809920at2"/>
<dbReference type="UniPathway" id="UPA00053">
    <property type="reaction ID" value="UER00089"/>
</dbReference>
<dbReference type="Proteomes" id="UP000001118">
    <property type="component" value="Chromosome"/>
</dbReference>
<dbReference type="GO" id="GO:0005737">
    <property type="term" value="C:cytoplasm"/>
    <property type="evidence" value="ECO:0007669"/>
    <property type="project" value="UniProtKB-SubCell"/>
</dbReference>
<dbReference type="GO" id="GO:0003866">
    <property type="term" value="F:3-phosphoshikimate 1-carboxyvinyltransferase activity"/>
    <property type="evidence" value="ECO:0007669"/>
    <property type="project" value="UniProtKB-UniRule"/>
</dbReference>
<dbReference type="GO" id="GO:0008652">
    <property type="term" value="P:amino acid biosynthetic process"/>
    <property type="evidence" value="ECO:0007669"/>
    <property type="project" value="UniProtKB-KW"/>
</dbReference>
<dbReference type="GO" id="GO:0009073">
    <property type="term" value="P:aromatic amino acid family biosynthetic process"/>
    <property type="evidence" value="ECO:0007669"/>
    <property type="project" value="UniProtKB-KW"/>
</dbReference>
<dbReference type="GO" id="GO:0009423">
    <property type="term" value="P:chorismate biosynthetic process"/>
    <property type="evidence" value="ECO:0007669"/>
    <property type="project" value="UniProtKB-UniRule"/>
</dbReference>
<dbReference type="CDD" id="cd01556">
    <property type="entry name" value="EPSP_synthase"/>
    <property type="match status" value="1"/>
</dbReference>
<dbReference type="FunFam" id="3.65.10.10:FF:000005">
    <property type="entry name" value="3-phosphoshikimate 1-carboxyvinyltransferase"/>
    <property type="match status" value="1"/>
</dbReference>
<dbReference type="Gene3D" id="3.65.10.10">
    <property type="entry name" value="Enolpyruvate transferase domain"/>
    <property type="match status" value="2"/>
</dbReference>
<dbReference type="HAMAP" id="MF_00210">
    <property type="entry name" value="EPSP_synth"/>
    <property type="match status" value="1"/>
</dbReference>
<dbReference type="InterPro" id="IPR001986">
    <property type="entry name" value="Enolpyruvate_Tfrase_dom"/>
</dbReference>
<dbReference type="InterPro" id="IPR036968">
    <property type="entry name" value="Enolpyruvate_Tfrase_sf"/>
</dbReference>
<dbReference type="InterPro" id="IPR006264">
    <property type="entry name" value="EPSP_synthase"/>
</dbReference>
<dbReference type="InterPro" id="IPR023193">
    <property type="entry name" value="EPSP_synthase_CS"/>
</dbReference>
<dbReference type="InterPro" id="IPR013792">
    <property type="entry name" value="RNA3'P_cycl/enolpyr_Trfase_a/b"/>
</dbReference>
<dbReference type="NCBIfam" id="TIGR01356">
    <property type="entry name" value="aroA"/>
    <property type="match status" value="1"/>
</dbReference>
<dbReference type="PANTHER" id="PTHR21090">
    <property type="entry name" value="AROM/DEHYDROQUINATE SYNTHASE"/>
    <property type="match status" value="1"/>
</dbReference>
<dbReference type="PANTHER" id="PTHR21090:SF5">
    <property type="entry name" value="PENTAFUNCTIONAL AROM POLYPEPTIDE"/>
    <property type="match status" value="1"/>
</dbReference>
<dbReference type="Pfam" id="PF00275">
    <property type="entry name" value="EPSP_synthase"/>
    <property type="match status" value="1"/>
</dbReference>
<dbReference type="PIRSF" id="PIRSF000505">
    <property type="entry name" value="EPSPS"/>
    <property type="match status" value="1"/>
</dbReference>
<dbReference type="SUPFAM" id="SSF55205">
    <property type="entry name" value="EPT/RTPC-like"/>
    <property type="match status" value="1"/>
</dbReference>
<dbReference type="PROSITE" id="PS00104">
    <property type="entry name" value="EPSP_SYNTHASE_1"/>
    <property type="match status" value="1"/>
</dbReference>
<organism>
    <name type="scientific">Nitratiruptor sp. (strain SB155-2)</name>
    <dbReference type="NCBI Taxonomy" id="387092"/>
    <lineage>
        <taxon>Bacteria</taxon>
        <taxon>Pseudomonadati</taxon>
        <taxon>Campylobacterota</taxon>
        <taxon>Epsilonproteobacteria</taxon>
        <taxon>Nautiliales</taxon>
        <taxon>Nitratiruptoraceae</taxon>
        <taxon>Nitratiruptor</taxon>
    </lineage>
</organism>
<comment type="function">
    <text evidence="1">Catalyzes the transfer of the enolpyruvyl moiety of phosphoenolpyruvate (PEP) to the 5-hydroxyl of shikimate-3-phosphate (S3P) to produce enolpyruvyl shikimate-3-phosphate and inorganic phosphate.</text>
</comment>
<comment type="catalytic activity">
    <reaction evidence="1">
        <text>3-phosphoshikimate + phosphoenolpyruvate = 5-O-(1-carboxyvinyl)-3-phosphoshikimate + phosphate</text>
        <dbReference type="Rhea" id="RHEA:21256"/>
        <dbReference type="ChEBI" id="CHEBI:43474"/>
        <dbReference type="ChEBI" id="CHEBI:57701"/>
        <dbReference type="ChEBI" id="CHEBI:58702"/>
        <dbReference type="ChEBI" id="CHEBI:145989"/>
        <dbReference type="EC" id="2.5.1.19"/>
    </reaction>
    <physiologicalReaction direction="left-to-right" evidence="1">
        <dbReference type="Rhea" id="RHEA:21257"/>
    </physiologicalReaction>
</comment>
<comment type="pathway">
    <text evidence="1">Metabolic intermediate biosynthesis; chorismate biosynthesis; chorismate from D-erythrose 4-phosphate and phosphoenolpyruvate: step 6/7.</text>
</comment>
<comment type="subunit">
    <text evidence="1">Monomer.</text>
</comment>
<comment type="subcellular location">
    <subcellularLocation>
        <location evidence="1">Cytoplasm</location>
    </subcellularLocation>
</comment>
<comment type="similarity">
    <text evidence="1">Belongs to the EPSP synthase family.</text>
</comment>